<reference key="1">
    <citation type="journal article" date="2002" name="Nature">
        <title>The genome sequence of Schizosaccharomyces pombe.</title>
        <authorList>
            <person name="Wood V."/>
            <person name="Gwilliam R."/>
            <person name="Rajandream M.A."/>
            <person name="Lyne M.H."/>
            <person name="Lyne R."/>
            <person name="Stewart A."/>
            <person name="Sgouros J.G."/>
            <person name="Peat N."/>
            <person name="Hayles J."/>
            <person name="Baker S.G."/>
            <person name="Basham D."/>
            <person name="Bowman S."/>
            <person name="Brooks K."/>
            <person name="Brown D."/>
            <person name="Brown S."/>
            <person name="Chillingworth T."/>
            <person name="Churcher C.M."/>
            <person name="Collins M."/>
            <person name="Connor R."/>
            <person name="Cronin A."/>
            <person name="Davis P."/>
            <person name="Feltwell T."/>
            <person name="Fraser A."/>
            <person name="Gentles S."/>
            <person name="Goble A."/>
            <person name="Hamlin N."/>
            <person name="Harris D.E."/>
            <person name="Hidalgo J."/>
            <person name="Hodgson G."/>
            <person name="Holroyd S."/>
            <person name="Hornsby T."/>
            <person name="Howarth S."/>
            <person name="Huckle E.J."/>
            <person name="Hunt S."/>
            <person name="Jagels K."/>
            <person name="James K.D."/>
            <person name="Jones L."/>
            <person name="Jones M."/>
            <person name="Leather S."/>
            <person name="McDonald S."/>
            <person name="McLean J."/>
            <person name="Mooney P."/>
            <person name="Moule S."/>
            <person name="Mungall K.L."/>
            <person name="Murphy L.D."/>
            <person name="Niblett D."/>
            <person name="Odell C."/>
            <person name="Oliver K."/>
            <person name="O'Neil S."/>
            <person name="Pearson D."/>
            <person name="Quail M.A."/>
            <person name="Rabbinowitsch E."/>
            <person name="Rutherford K.M."/>
            <person name="Rutter S."/>
            <person name="Saunders D."/>
            <person name="Seeger K."/>
            <person name="Sharp S."/>
            <person name="Skelton J."/>
            <person name="Simmonds M.N."/>
            <person name="Squares R."/>
            <person name="Squares S."/>
            <person name="Stevens K."/>
            <person name="Taylor K."/>
            <person name="Taylor R.G."/>
            <person name="Tivey A."/>
            <person name="Walsh S.V."/>
            <person name="Warren T."/>
            <person name="Whitehead S."/>
            <person name="Woodward J.R."/>
            <person name="Volckaert G."/>
            <person name="Aert R."/>
            <person name="Robben J."/>
            <person name="Grymonprez B."/>
            <person name="Weltjens I."/>
            <person name="Vanstreels E."/>
            <person name="Rieger M."/>
            <person name="Schaefer M."/>
            <person name="Mueller-Auer S."/>
            <person name="Gabel C."/>
            <person name="Fuchs M."/>
            <person name="Duesterhoeft A."/>
            <person name="Fritzc C."/>
            <person name="Holzer E."/>
            <person name="Moestl D."/>
            <person name="Hilbert H."/>
            <person name="Borzym K."/>
            <person name="Langer I."/>
            <person name="Beck A."/>
            <person name="Lehrach H."/>
            <person name="Reinhardt R."/>
            <person name="Pohl T.M."/>
            <person name="Eger P."/>
            <person name="Zimmermann W."/>
            <person name="Wedler H."/>
            <person name="Wambutt R."/>
            <person name="Purnelle B."/>
            <person name="Goffeau A."/>
            <person name="Cadieu E."/>
            <person name="Dreano S."/>
            <person name="Gloux S."/>
            <person name="Lelaure V."/>
            <person name="Mottier S."/>
            <person name="Galibert F."/>
            <person name="Aves S.J."/>
            <person name="Xiang Z."/>
            <person name="Hunt C."/>
            <person name="Moore K."/>
            <person name="Hurst S.M."/>
            <person name="Lucas M."/>
            <person name="Rochet M."/>
            <person name="Gaillardin C."/>
            <person name="Tallada V.A."/>
            <person name="Garzon A."/>
            <person name="Thode G."/>
            <person name="Daga R.R."/>
            <person name="Cruzado L."/>
            <person name="Jimenez J."/>
            <person name="Sanchez M."/>
            <person name="del Rey F."/>
            <person name="Benito J."/>
            <person name="Dominguez A."/>
            <person name="Revuelta J.L."/>
            <person name="Moreno S."/>
            <person name="Armstrong J."/>
            <person name="Forsburg S.L."/>
            <person name="Cerutti L."/>
            <person name="Lowe T."/>
            <person name="McCombie W.R."/>
            <person name="Paulsen I."/>
            <person name="Potashkin J."/>
            <person name="Shpakovski G.V."/>
            <person name="Ussery D."/>
            <person name="Barrell B.G."/>
            <person name="Nurse P."/>
        </authorList>
    </citation>
    <scope>NUCLEOTIDE SEQUENCE [LARGE SCALE GENOMIC DNA]</scope>
    <source>
        <strain>972 / ATCC 24843</strain>
    </source>
</reference>
<comment type="subcellular location">
    <subcellularLocation>
        <location evidence="3">Membrane</location>
        <topology evidence="3">Multi-pass membrane protein</topology>
    </subcellularLocation>
</comment>
<accession>O94597</accession>
<protein>
    <recommendedName>
        <fullName>Putative uncharacterized membrane protein C622.07</fullName>
    </recommendedName>
</protein>
<organism>
    <name type="scientific">Schizosaccharomyces pombe (strain 972 / ATCC 24843)</name>
    <name type="common">Fission yeast</name>
    <dbReference type="NCBI Taxonomy" id="284812"/>
    <lineage>
        <taxon>Eukaryota</taxon>
        <taxon>Fungi</taxon>
        <taxon>Dikarya</taxon>
        <taxon>Ascomycota</taxon>
        <taxon>Taphrinomycotina</taxon>
        <taxon>Schizosaccharomycetes</taxon>
        <taxon>Schizosaccharomycetales</taxon>
        <taxon>Schizosaccharomycetaceae</taxon>
        <taxon>Schizosaccharomyces</taxon>
    </lineage>
</organism>
<name>YC87_SCHPO</name>
<gene>
    <name type="ORF">SPCC622.07</name>
</gene>
<feature type="chain" id="PRO_0000303967" description="Putative uncharacterized membrane protein C622.07">
    <location>
        <begin position="1"/>
        <end position="128"/>
    </location>
</feature>
<feature type="transmembrane region" description="Helical" evidence="1">
    <location>
        <begin position="33"/>
        <end position="53"/>
    </location>
</feature>
<feature type="transmembrane region" description="Helical" evidence="1">
    <location>
        <begin position="61"/>
        <end position="81"/>
    </location>
</feature>
<feature type="region of interest" description="Disordered" evidence="2">
    <location>
        <begin position="99"/>
        <end position="128"/>
    </location>
</feature>
<feature type="compositionally biased region" description="Polar residues" evidence="2">
    <location>
        <begin position="99"/>
        <end position="120"/>
    </location>
</feature>
<dbReference type="EMBL" id="CU329672">
    <property type="protein sequence ID" value="CAA21863.1"/>
    <property type="molecule type" value="Genomic_DNA"/>
</dbReference>
<dbReference type="PIR" id="T41487">
    <property type="entry name" value="T41487"/>
</dbReference>
<dbReference type="RefSeq" id="NP_588179.1">
    <property type="nucleotide sequence ID" value="NM_001023169.2"/>
</dbReference>
<dbReference type="SMR" id="O94597"/>
<dbReference type="BioGRID" id="275844">
    <property type="interactions" value="2"/>
</dbReference>
<dbReference type="iPTMnet" id="O94597"/>
<dbReference type="PaxDb" id="4896-SPCC622.07.1"/>
<dbReference type="EnsemblFungi" id="SPCC622.07.1">
    <property type="protein sequence ID" value="SPCC622.07.1:pep"/>
    <property type="gene ID" value="SPCC622.07"/>
</dbReference>
<dbReference type="KEGG" id="spo:2539276"/>
<dbReference type="PomBase" id="SPCC622.07"/>
<dbReference type="VEuPathDB" id="FungiDB:SPCC622.07"/>
<dbReference type="HOGENOM" id="CLU_1960859_0_0_1"/>
<dbReference type="InParanoid" id="O94597"/>
<dbReference type="PRO" id="PR:O94597"/>
<dbReference type="Proteomes" id="UP000002485">
    <property type="component" value="Chromosome III"/>
</dbReference>
<dbReference type="GO" id="GO:0005783">
    <property type="term" value="C:endoplasmic reticulum"/>
    <property type="evidence" value="ECO:0007005"/>
    <property type="project" value="PomBase"/>
</dbReference>
<dbReference type="GO" id="GO:0016020">
    <property type="term" value="C:membrane"/>
    <property type="evidence" value="ECO:0007669"/>
    <property type="project" value="UniProtKB-SubCell"/>
</dbReference>
<proteinExistence type="predicted"/>
<evidence type="ECO:0000255" key="1"/>
<evidence type="ECO:0000256" key="2">
    <source>
        <dbReference type="SAM" id="MobiDB-lite"/>
    </source>
</evidence>
<evidence type="ECO:0000305" key="3"/>
<keyword id="KW-0472">Membrane</keyword>
<keyword id="KW-1185">Reference proteome</keyword>
<keyword id="KW-0812">Transmembrane</keyword>
<keyword id="KW-1133">Transmembrane helix</keyword>
<sequence length="128" mass="14893">MASLDIHLYVKKDLTYGECVRVAKEKYKIIHRLLYISIIFLFLNYVVDIVCYVKNYNGFSFFCWVFLNLGVIGIIITVIIYYISIPKPDAESEFLNKPDSLNQNVGESQSNEPPKYTSTFMDELDKQD</sequence>